<accession>B0BNZ0</accession>
<reference key="1">
    <citation type="journal article" date="2008" name="PLoS ONE">
        <title>Genome biology of Actinobacillus pleuropneumoniae JL03, an isolate of serotype 3 prevalent in China.</title>
        <authorList>
            <person name="Xu Z."/>
            <person name="Zhou Y."/>
            <person name="Li L."/>
            <person name="Zhou R."/>
            <person name="Xiao S."/>
            <person name="Wan Y."/>
            <person name="Zhang S."/>
            <person name="Wang K."/>
            <person name="Li W."/>
            <person name="Li L."/>
            <person name="Jin H."/>
            <person name="Kang M."/>
            <person name="Dalai B."/>
            <person name="Li T."/>
            <person name="Liu L."/>
            <person name="Cheng Y."/>
            <person name="Zhang L."/>
            <person name="Xu T."/>
            <person name="Zheng H."/>
            <person name="Pu S."/>
            <person name="Wang B."/>
            <person name="Gu W."/>
            <person name="Zhang X.L."/>
            <person name="Zhu G.-F."/>
            <person name="Wang S."/>
            <person name="Zhao G.-P."/>
            <person name="Chen H."/>
        </authorList>
    </citation>
    <scope>NUCLEOTIDE SEQUENCE [LARGE SCALE GENOMIC DNA]</scope>
    <source>
        <strain>JL03</strain>
    </source>
</reference>
<name>TMAR_ACTPJ</name>
<evidence type="ECO:0000255" key="1">
    <source>
        <dbReference type="HAMAP-Rule" id="MF_00683"/>
    </source>
</evidence>
<evidence type="ECO:0000256" key="2">
    <source>
        <dbReference type="SAM" id="MobiDB-lite"/>
    </source>
</evidence>
<feature type="chain" id="PRO_1000131763" description="Pole-localizer protein TmaR">
    <location>
        <begin position="1"/>
        <end position="111"/>
    </location>
</feature>
<feature type="region of interest" description="Disordered" evidence="2">
    <location>
        <begin position="92"/>
        <end position="111"/>
    </location>
</feature>
<feature type="coiled-coil region" evidence="1">
    <location>
        <begin position="70"/>
        <end position="104"/>
    </location>
</feature>
<dbReference type="EMBL" id="CP000687">
    <property type="protein sequence ID" value="ABY69275.1"/>
    <property type="molecule type" value="Genomic_DNA"/>
</dbReference>
<dbReference type="RefSeq" id="WP_005600925.1">
    <property type="nucleotide sequence ID" value="NC_010278.1"/>
</dbReference>
<dbReference type="SMR" id="B0BNZ0"/>
<dbReference type="KEGG" id="apj:APJL_0708"/>
<dbReference type="HOGENOM" id="CLU_153146_0_0_6"/>
<dbReference type="Proteomes" id="UP000008547">
    <property type="component" value="Chromosome"/>
</dbReference>
<dbReference type="GO" id="GO:0005829">
    <property type="term" value="C:cytosol"/>
    <property type="evidence" value="ECO:0007669"/>
    <property type="project" value="TreeGrafter"/>
</dbReference>
<dbReference type="HAMAP" id="MF_00683">
    <property type="entry name" value="Pole_loc_TmaR"/>
    <property type="match status" value="1"/>
</dbReference>
<dbReference type="InterPro" id="IPR007458">
    <property type="entry name" value="DUF496"/>
</dbReference>
<dbReference type="NCBIfam" id="NF003844">
    <property type="entry name" value="PRK05423.1"/>
    <property type="match status" value="1"/>
</dbReference>
<dbReference type="PANTHER" id="PTHR39591">
    <property type="entry name" value="UPF0265 PROTEIN YEEX"/>
    <property type="match status" value="1"/>
</dbReference>
<dbReference type="PANTHER" id="PTHR39591:SF1">
    <property type="entry name" value="UPF0265 PROTEIN YEEX"/>
    <property type="match status" value="1"/>
</dbReference>
<dbReference type="Pfam" id="PF04363">
    <property type="entry name" value="DUF496"/>
    <property type="match status" value="1"/>
</dbReference>
<dbReference type="PIRSF" id="PIRSF028773">
    <property type="entry name" value="UCP028773"/>
    <property type="match status" value="1"/>
</dbReference>
<organism>
    <name type="scientific">Actinobacillus pleuropneumoniae serotype 3 (strain JL03)</name>
    <dbReference type="NCBI Taxonomy" id="434271"/>
    <lineage>
        <taxon>Bacteria</taxon>
        <taxon>Pseudomonadati</taxon>
        <taxon>Pseudomonadota</taxon>
        <taxon>Gammaproteobacteria</taxon>
        <taxon>Pasteurellales</taxon>
        <taxon>Pasteurellaceae</taxon>
        <taxon>Actinobacillus</taxon>
    </lineage>
</organism>
<protein>
    <recommendedName>
        <fullName evidence="1">Pole-localizer protein TmaR</fullName>
    </recommendedName>
</protein>
<proteinExistence type="inferred from homology"/>
<comment type="function">
    <text evidence="1">Pole-localizer protein involved in the regulation of several cellular processes.</text>
</comment>
<comment type="subcellular location">
    <subcellularLocation>
        <location evidence="1">Cytoplasm</location>
    </subcellularLocation>
</comment>
<comment type="similarity">
    <text evidence="1">Belongs to the pole-localizer TmaR family.</text>
</comment>
<keyword id="KW-0175">Coiled coil</keyword>
<keyword id="KW-0963">Cytoplasm</keyword>
<gene>
    <name evidence="1" type="primary">tmaR</name>
    <name type="ordered locus">APJL_0708</name>
</gene>
<sequence length="111" mass="13360">MADVKKQSFQDMLDYVHLYRLKNKLHRETADNDRKIRDNQKRVLLLDNLNQYINDSMTVEDIRAIIANMRDDYENRVDDYMIRNAELSKQRREIRQKMAAHKTSASEKSEK</sequence>